<name>HRCA_STRS7</name>
<gene>
    <name evidence="1" type="primary">hrcA</name>
    <name type="ordered locus">SZO_15800</name>
</gene>
<accession>C0ME88</accession>
<organism>
    <name type="scientific">Streptococcus equi subsp. zooepidemicus (strain H70)</name>
    <dbReference type="NCBI Taxonomy" id="553483"/>
    <lineage>
        <taxon>Bacteria</taxon>
        <taxon>Bacillati</taxon>
        <taxon>Bacillota</taxon>
        <taxon>Bacilli</taxon>
        <taxon>Lactobacillales</taxon>
        <taxon>Streptococcaceae</taxon>
        <taxon>Streptococcus</taxon>
    </lineage>
</organism>
<proteinExistence type="inferred from homology"/>
<evidence type="ECO:0000255" key="1">
    <source>
        <dbReference type="HAMAP-Rule" id="MF_00081"/>
    </source>
</evidence>
<dbReference type="EMBL" id="FM204884">
    <property type="protein sequence ID" value="CAX00293.1"/>
    <property type="molecule type" value="Genomic_DNA"/>
</dbReference>
<dbReference type="SMR" id="C0ME88"/>
<dbReference type="KEGG" id="seq:SZO_15800"/>
<dbReference type="eggNOG" id="COG1420">
    <property type="taxonomic scope" value="Bacteria"/>
</dbReference>
<dbReference type="HOGENOM" id="CLU_050019_1_0_9"/>
<dbReference type="Proteomes" id="UP000001368">
    <property type="component" value="Chromosome"/>
</dbReference>
<dbReference type="GO" id="GO:0003677">
    <property type="term" value="F:DNA binding"/>
    <property type="evidence" value="ECO:0007669"/>
    <property type="project" value="InterPro"/>
</dbReference>
<dbReference type="GO" id="GO:0045892">
    <property type="term" value="P:negative regulation of DNA-templated transcription"/>
    <property type="evidence" value="ECO:0007669"/>
    <property type="project" value="UniProtKB-UniRule"/>
</dbReference>
<dbReference type="Gene3D" id="3.30.450.40">
    <property type="match status" value="1"/>
</dbReference>
<dbReference type="Gene3D" id="3.30.390.60">
    <property type="entry name" value="Heat-inducible transcription repressor hrca homolog, domain 3"/>
    <property type="match status" value="1"/>
</dbReference>
<dbReference type="Gene3D" id="1.10.10.10">
    <property type="entry name" value="Winged helix-like DNA-binding domain superfamily/Winged helix DNA-binding domain"/>
    <property type="match status" value="1"/>
</dbReference>
<dbReference type="HAMAP" id="MF_00081">
    <property type="entry name" value="HrcA"/>
    <property type="match status" value="1"/>
</dbReference>
<dbReference type="InterPro" id="IPR029016">
    <property type="entry name" value="GAF-like_dom_sf"/>
</dbReference>
<dbReference type="InterPro" id="IPR002571">
    <property type="entry name" value="HrcA"/>
</dbReference>
<dbReference type="InterPro" id="IPR021153">
    <property type="entry name" value="HrcA_C"/>
</dbReference>
<dbReference type="InterPro" id="IPR036388">
    <property type="entry name" value="WH-like_DNA-bd_sf"/>
</dbReference>
<dbReference type="InterPro" id="IPR036390">
    <property type="entry name" value="WH_DNA-bd_sf"/>
</dbReference>
<dbReference type="InterPro" id="IPR005104">
    <property type="entry name" value="WHTH_HrcA_DNA-bd"/>
</dbReference>
<dbReference type="InterPro" id="IPR023120">
    <property type="entry name" value="WHTH_transcript_rep_HrcA_IDD"/>
</dbReference>
<dbReference type="NCBIfam" id="TIGR00331">
    <property type="entry name" value="hrcA"/>
    <property type="match status" value="1"/>
</dbReference>
<dbReference type="PANTHER" id="PTHR34824">
    <property type="entry name" value="HEAT-INDUCIBLE TRANSCRIPTION REPRESSOR HRCA"/>
    <property type="match status" value="1"/>
</dbReference>
<dbReference type="PANTHER" id="PTHR34824:SF1">
    <property type="entry name" value="HEAT-INDUCIBLE TRANSCRIPTION REPRESSOR HRCA"/>
    <property type="match status" value="1"/>
</dbReference>
<dbReference type="Pfam" id="PF01628">
    <property type="entry name" value="HrcA"/>
    <property type="match status" value="1"/>
</dbReference>
<dbReference type="Pfam" id="PF03444">
    <property type="entry name" value="HrcA_DNA-bdg"/>
    <property type="match status" value="1"/>
</dbReference>
<dbReference type="PIRSF" id="PIRSF005485">
    <property type="entry name" value="HrcA"/>
    <property type="match status" value="1"/>
</dbReference>
<dbReference type="SUPFAM" id="SSF55781">
    <property type="entry name" value="GAF domain-like"/>
    <property type="match status" value="1"/>
</dbReference>
<dbReference type="SUPFAM" id="SSF46785">
    <property type="entry name" value="Winged helix' DNA-binding domain"/>
    <property type="match status" value="1"/>
</dbReference>
<protein>
    <recommendedName>
        <fullName evidence="1">Heat-inducible transcription repressor HrcA</fullName>
    </recommendedName>
</protein>
<keyword id="KW-0678">Repressor</keyword>
<keyword id="KW-0346">Stress response</keyword>
<keyword id="KW-0804">Transcription</keyword>
<keyword id="KW-0805">Transcription regulation</keyword>
<sequence>MITERQSNILNLIVDLFTQTHEPVGSKALQSLIASSSATIRNDMAKLEKLGLLEKAHTSSGRMPSAAGFKYFVEHSLNLGSIDEQDLYQLVKAFDFEAFKLEDVLLRASQMLSDTTGYTAAILDVEPARQRLTGFDIVQLSSHDALAVLTLDESKPLTVQFAIPKNFMNRDLLVLKGIVADRLLGKDVMTVHYKLRTEIPQIVQKYFTVTDNVLDLFDYIFVGLFRETIFVSGKVAALDYAGLATYQFLDEEQRLALSIRQSLSEEEMATVQVADSSEPALANVTLLTYKFLIPYRGFGLLSLIGPVDMDYRRSVSLINVIGQLLAVKLRDYYRYLNSNHYEVH</sequence>
<comment type="function">
    <text evidence="1">Negative regulator of class I heat shock genes (grpE-dnaK-dnaJ and groELS operons). Prevents heat-shock induction of these operons.</text>
</comment>
<comment type="similarity">
    <text evidence="1">Belongs to the HrcA family.</text>
</comment>
<reference key="1">
    <citation type="journal article" date="2009" name="PLoS Pathog.">
        <title>Genomic evidence for the evolution of Streptococcus equi: host restriction, increased virulence, and genetic exchange with human pathogens.</title>
        <authorList>
            <person name="Holden M.T.G."/>
            <person name="Heather Z."/>
            <person name="Paillot R."/>
            <person name="Steward K.F."/>
            <person name="Webb K."/>
            <person name="Ainslie F."/>
            <person name="Jourdan T."/>
            <person name="Bason N.C."/>
            <person name="Holroyd N.E."/>
            <person name="Mungall K."/>
            <person name="Quail M.A."/>
            <person name="Sanders M."/>
            <person name="Simmonds M."/>
            <person name="Willey D."/>
            <person name="Brooks K."/>
            <person name="Aanensen D.M."/>
            <person name="Spratt B.G."/>
            <person name="Jolley K.A."/>
            <person name="Maiden M.C.J."/>
            <person name="Kehoe M."/>
            <person name="Chanter N."/>
            <person name="Bentley S.D."/>
            <person name="Robinson C."/>
            <person name="Maskell D.J."/>
            <person name="Parkhill J."/>
            <person name="Waller A.S."/>
        </authorList>
    </citation>
    <scope>NUCLEOTIDE SEQUENCE [LARGE SCALE GENOMIC DNA]</scope>
    <source>
        <strain>H70</strain>
    </source>
</reference>
<feature type="chain" id="PRO_1000202554" description="Heat-inducible transcription repressor HrcA">
    <location>
        <begin position="1"/>
        <end position="344"/>
    </location>
</feature>